<dbReference type="EMBL" id="AP008229">
    <property type="protein sequence ID" value="BAE69047.1"/>
    <property type="molecule type" value="Genomic_DNA"/>
</dbReference>
<dbReference type="RefSeq" id="WP_011259076.1">
    <property type="nucleotide sequence ID" value="NC_007705.1"/>
</dbReference>
<dbReference type="SMR" id="Q2P330"/>
<dbReference type="KEGG" id="xom:XOO2292"/>
<dbReference type="HOGENOM" id="CLU_078938_4_1_6"/>
<dbReference type="GO" id="GO:1990904">
    <property type="term" value="C:ribonucleoprotein complex"/>
    <property type="evidence" value="ECO:0007669"/>
    <property type="project" value="UniProtKB-KW"/>
</dbReference>
<dbReference type="GO" id="GO:0005840">
    <property type="term" value="C:ribosome"/>
    <property type="evidence" value="ECO:0007669"/>
    <property type="project" value="UniProtKB-KW"/>
</dbReference>
<dbReference type="GO" id="GO:0019843">
    <property type="term" value="F:rRNA binding"/>
    <property type="evidence" value="ECO:0007669"/>
    <property type="project" value="UniProtKB-UniRule"/>
</dbReference>
<dbReference type="GO" id="GO:0003735">
    <property type="term" value="F:structural constituent of ribosome"/>
    <property type="evidence" value="ECO:0007669"/>
    <property type="project" value="InterPro"/>
</dbReference>
<dbReference type="GO" id="GO:0006412">
    <property type="term" value="P:translation"/>
    <property type="evidence" value="ECO:0007669"/>
    <property type="project" value="UniProtKB-UniRule"/>
</dbReference>
<dbReference type="FunFam" id="3.10.430.100:FF:000007">
    <property type="entry name" value="50S ribosomal protein L9"/>
    <property type="match status" value="1"/>
</dbReference>
<dbReference type="FunFam" id="3.40.5.10:FF:000001">
    <property type="entry name" value="50S ribosomal protein L9"/>
    <property type="match status" value="1"/>
</dbReference>
<dbReference type="Gene3D" id="3.10.430.100">
    <property type="entry name" value="Ribosomal protein L9, C-terminal domain"/>
    <property type="match status" value="1"/>
</dbReference>
<dbReference type="Gene3D" id="3.40.5.10">
    <property type="entry name" value="Ribosomal protein L9, N-terminal domain"/>
    <property type="match status" value="1"/>
</dbReference>
<dbReference type="HAMAP" id="MF_00503">
    <property type="entry name" value="Ribosomal_bL9"/>
    <property type="match status" value="1"/>
</dbReference>
<dbReference type="InterPro" id="IPR000244">
    <property type="entry name" value="Ribosomal_bL9"/>
</dbReference>
<dbReference type="InterPro" id="IPR009027">
    <property type="entry name" value="Ribosomal_bL9/RNase_H1_N"/>
</dbReference>
<dbReference type="InterPro" id="IPR020594">
    <property type="entry name" value="Ribosomal_bL9_bac/chp"/>
</dbReference>
<dbReference type="InterPro" id="IPR020069">
    <property type="entry name" value="Ribosomal_bL9_C"/>
</dbReference>
<dbReference type="InterPro" id="IPR036791">
    <property type="entry name" value="Ribosomal_bL9_C_sf"/>
</dbReference>
<dbReference type="InterPro" id="IPR020070">
    <property type="entry name" value="Ribosomal_bL9_N"/>
</dbReference>
<dbReference type="InterPro" id="IPR036935">
    <property type="entry name" value="Ribosomal_bL9_N_sf"/>
</dbReference>
<dbReference type="NCBIfam" id="TIGR00158">
    <property type="entry name" value="L9"/>
    <property type="match status" value="1"/>
</dbReference>
<dbReference type="PANTHER" id="PTHR21368">
    <property type="entry name" value="50S RIBOSOMAL PROTEIN L9"/>
    <property type="match status" value="1"/>
</dbReference>
<dbReference type="Pfam" id="PF03948">
    <property type="entry name" value="Ribosomal_L9_C"/>
    <property type="match status" value="1"/>
</dbReference>
<dbReference type="Pfam" id="PF01281">
    <property type="entry name" value="Ribosomal_L9_N"/>
    <property type="match status" value="1"/>
</dbReference>
<dbReference type="SUPFAM" id="SSF55658">
    <property type="entry name" value="L9 N-domain-like"/>
    <property type="match status" value="1"/>
</dbReference>
<dbReference type="SUPFAM" id="SSF55653">
    <property type="entry name" value="Ribosomal protein L9 C-domain"/>
    <property type="match status" value="1"/>
</dbReference>
<dbReference type="PROSITE" id="PS00651">
    <property type="entry name" value="RIBOSOMAL_L9"/>
    <property type="match status" value="1"/>
</dbReference>
<feature type="chain" id="PRO_0000236624" description="Large ribosomal subunit protein bL9">
    <location>
        <begin position="1"/>
        <end position="149"/>
    </location>
</feature>
<gene>
    <name evidence="1" type="primary">rplI</name>
    <name type="ordered locus">XOO2292</name>
</gene>
<accession>Q2P330</accession>
<evidence type="ECO:0000255" key="1">
    <source>
        <dbReference type="HAMAP-Rule" id="MF_00503"/>
    </source>
</evidence>
<evidence type="ECO:0000305" key="2"/>
<keyword id="KW-0687">Ribonucleoprotein</keyword>
<keyword id="KW-0689">Ribosomal protein</keyword>
<keyword id="KW-0694">RNA-binding</keyword>
<keyword id="KW-0699">rRNA-binding</keyword>
<protein>
    <recommendedName>
        <fullName evidence="1">Large ribosomal subunit protein bL9</fullName>
    </recommendedName>
    <alternativeName>
        <fullName evidence="2">50S ribosomal protein L9</fullName>
    </alternativeName>
</protein>
<proteinExistence type="inferred from homology"/>
<comment type="function">
    <text evidence="1">Binds to the 23S rRNA.</text>
</comment>
<comment type="similarity">
    <text evidence="1">Belongs to the bacterial ribosomal protein bL9 family.</text>
</comment>
<sequence>MDLILLQKVTNLGNLGDKVSVKPGYGRNFLVPQGKAVPATAANVEAFETKRAEYEAKASSILADAQSRATKFEGASVTICAHASTEGKLYGSVGPRDIAEAFTAAGLPLEKSEVILGEGAFRNVGEYDVVLHLHADVETTVKVIVESDA</sequence>
<reference key="1">
    <citation type="journal article" date="2005" name="Jpn. Agric. Res. Q.">
        <title>Genome sequence of Xanthomonas oryzae pv. oryzae suggests contribution of large numbers of effector genes and insertion sequences to its race diversity.</title>
        <authorList>
            <person name="Ochiai H."/>
            <person name="Inoue Y."/>
            <person name="Takeya M."/>
            <person name="Sasaki A."/>
            <person name="Kaku H."/>
        </authorList>
    </citation>
    <scope>NUCLEOTIDE SEQUENCE [LARGE SCALE GENOMIC DNA]</scope>
    <source>
        <strain>MAFF 311018</strain>
    </source>
</reference>
<organism>
    <name type="scientific">Xanthomonas oryzae pv. oryzae (strain MAFF 311018)</name>
    <dbReference type="NCBI Taxonomy" id="342109"/>
    <lineage>
        <taxon>Bacteria</taxon>
        <taxon>Pseudomonadati</taxon>
        <taxon>Pseudomonadota</taxon>
        <taxon>Gammaproteobacteria</taxon>
        <taxon>Lysobacterales</taxon>
        <taxon>Lysobacteraceae</taxon>
        <taxon>Xanthomonas</taxon>
    </lineage>
</organism>
<name>RL9_XANOM</name>